<gene>
    <name evidence="1" type="primary">hemH</name>
    <name type="ordered locus">PMM0525</name>
</gene>
<keyword id="KW-0963">Cytoplasm</keyword>
<keyword id="KW-0350">Heme biosynthesis</keyword>
<keyword id="KW-0408">Iron</keyword>
<keyword id="KW-0456">Lyase</keyword>
<keyword id="KW-0479">Metal-binding</keyword>
<keyword id="KW-0627">Porphyrin biosynthesis</keyword>
<accession>Q7V2F5</accession>
<name>HEMH_PROMP</name>
<comment type="function">
    <text evidence="1">Catalyzes the ferrous insertion into protoporphyrin IX.</text>
</comment>
<comment type="catalytic activity">
    <reaction evidence="1">
        <text>heme b + 2 H(+) = protoporphyrin IX + Fe(2+)</text>
        <dbReference type="Rhea" id="RHEA:22584"/>
        <dbReference type="ChEBI" id="CHEBI:15378"/>
        <dbReference type="ChEBI" id="CHEBI:29033"/>
        <dbReference type="ChEBI" id="CHEBI:57306"/>
        <dbReference type="ChEBI" id="CHEBI:60344"/>
        <dbReference type="EC" id="4.98.1.1"/>
    </reaction>
</comment>
<comment type="pathway">
    <text evidence="1">Porphyrin-containing compound metabolism; protoheme biosynthesis; protoheme from protoporphyrin-IX: step 1/1.</text>
</comment>
<comment type="subcellular location">
    <subcellularLocation>
        <location evidence="1">Cytoplasm</location>
    </subcellularLocation>
</comment>
<comment type="similarity">
    <text evidence="1">Belongs to the ferrochelatase family.</text>
</comment>
<proteinExistence type="inferred from homology"/>
<sequence length="391" mass="44195">MEKVGVLLMNLGGPERITDVGPFLYNLFSDPEIIRLPVPAFQKPLAWLISTLRSTTSQQAYLSIGGGSPIRRITEQQARELQSKLRDKGLNVTTYIAMRYWHPFTESAIADMKADGVDQIVVLPLYPHFSISTSGSSFRELKKLRDSDSEFQKIPMRCVRSWFSQSGYLKSMVELISEQISLCESPDSAHIFFTAHGVPKSYVEEAGDPYKEQIEDCSLLIIDELEKYLGHTNPYTLSYQSRVGPVEWLKPYTEEVLTDLGKAKVNDLIVVPISFVGEHIETLQEIDIEYKEIAEKAGIVNFRRVKALNTHPTFIDGLSELVVSCLEGPIINIEKASELPEKVKLYPQEKWQWGWNNSSEVWNGRVAMIVFLILFIELISGSGPLHKLGIL</sequence>
<reference key="1">
    <citation type="journal article" date="2003" name="Nature">
        <title>Genome divergence in two Prochlorococcus ecotypes reflects oceanic niche differentiation.</title>
        <authorList>
            <person name="Rocap G."/>
            <person name="Larimer F.W."/>
            <person name="Lamerdin J.E."/>
            <person name="Malfatti S."/>
            <person name="Chain P."/>
            <person name="Ahlgren N.A."/>
            <person name="Arellano A."/>
            <person name="Coleman M."/>
            <person name="Hauser L."/>
            <person name="Hess W.R."/>
            <person name="Johnson Z.I."/>
            <person name="Land M.L."/>
            <person name="Lindell D."/>
            <person name="Post A.F."/>
            <person name="Regala W."/>
            <person name="Shah M."/>
            <person name="Shaw S.L."/>
            <person name="Steglich C."/>
            <person name="Sullivan M.B."/>
            <person name="Ting C.S."/>
            <person name="Tolonen A."/>
            <person name="Webb E.A."/>
            <person name="Zinser E.R."/>
            <person name="Chisholm S.W."/>
        </authorList>
    </citation>
    <scope>NUCLEOTIDE SEQUENCE [LARGE SCALE GENOMIC DNA]</scope>
    <source>
        <strain>CCMP1986 / NIES-2087 / MED4</strain>
    </source>
</reference>
<dbReference type="EC" id="4.98.1.1" evidence="1"/>
<dbReference type="EMBL" id="BX548174">
    <property type="protein sequence ID" value="CAE18984.1"/>
    <property type="molecule type" value="Genomic_DNA"/>
</dbReference>
<dbReference type="RefSeq" id="WP_011132160.1">
    <property type="nucleotide sequence ID" value="NC_005072.1"/>
</dbReference>
<dbReference type="SMR" id="Q7V2F5"/>
<dbReference type="STRING" id="59919.PMM0525"/>
<dbReference type="KEGG" id="pmm:PMM0525"/>
<dbReference type="eggNOG" id="COG0276">
    <property type="taxonomic scope" value="Bacteria"/>
</dbReference>
<dbReference type="HOGENOM" id="CLU_018884_4_3_3"/>
<dbReference type="OrthoDB" id="9809741at2"/>
<dbReference type="UniPathway" id="UPA00252">
    <property type="reaction ID" value="UER00325"/>
</dbReference>
<dbReference type="Proteomes" id="UP000001026">
    <property type="component" value="Chromosome"/>
</dbReference>
<dbReference type="GO" id="GO:0005737">
    <property type="term" value="C:cytoplasm"/>
    <property type="evidence" value="ECO:0007669"/>
    <property type="project" value="UniProtKB-SubCell"/>
</dbReference>
<dbReference type="GO" id="GO:0004325">
    <property type="term" value="F:ferrochelatase activity"/>
    <property type="evidence" value="ECO:0007669"/>
    <property type="project" value="UniProtKB-UniRule"/>
</dbReference>
<dbReference type="GO" id="GO:0046872">
    <property type="term" value="F:metal ion binding"/>
    <property type="evidence" value="ECO:0007669"/>
    <property type="project" value="UniProtKB-KW"/>
</dbReference>
<dbReference type="GO" id="GO:0006783">
    <property type="term" value="P:heme biosynthetic process"/>
    <property type="evidence" value="ECO:0007669"/>
    <property type="project" value="UniProtKB-UniRule"/>
</dbReference>
<dbReference type="CDD" id="cd00419">
    <property type="entry name" value="Ferrochelatase_C"/>
    <property type="match status" value="1"/>
</dbReference>
<dbReference type="CDD" id="cd03411">
    <property type="entry name" value="Ferrochelatase_N"/>
    <property type="match status" value="1"/>
</dbReference>
<dbReference type="FunFam" id="3.40.50.1400:FF:000006">
    <property type="entry name" value="Ferrochelatase"/>
    <property type="match status" value="1"/>
</dbReference>
<dbReference type="Gene3D" id="3.40.50.1400">
    <property type="match status" value="2"/>
</dbReference>
<dbReference type="HAMAP" id="MF_00323">
    <property type="entry name" value="Ferrochelatase"/>
    <property type="match status" value="1"/>
</dbReference>
<dbReference type="InterPro" id="IPR001015">
    <property type="entry name" value="Ferrochelatase"/>
</dbReference>
<dbReference type="InterPro" id="IPR019772">
    <property type="entry name" value="Ferrochelatase_AS"/>
</dbReference>
<dbReference type="InterPro" id="IPR033644">
    <property type="entry name" value="Ferrochelatase_C"/>
</dbReference>
<dbReference type="InterPro" id="IPR033659">
    <property type="entry name" value="Ferrochelatase_N"/>
</dbReference>
<dbReference type="NCBIfam" id="TIGR00109">
    <property type="entry name" value="hemH"/>
    <property type="match status" value="1"/>
</dbReference>
<dbReference type="PANTHER" id="PTHR11108">
    <property type="entry name" value="FERROCHELATASE"/>
    <property type="match status" value="1"/>
</dbReference>
<dbReference type="PANTHER" id="PTHR11108:SF1">
    <property type="entry name" value="FERROCHELATASE, MITOCHONDRIAL"/>
    <property type="match status" value="1"/>
</dbReference>
<dbReference type="Pfam" id="PF00762">
    <property type="entry name" value="Ferrochelatase"/>
    <property type="match status" value="1"/>
</dbReference>
<dbReference type="SUPFAM" id="SSF53800">
    <property type="entry name" value="Chelatase"/>
    <property type="match status" value="1"/>
</dbReference>
<dbReference type="SUPFAM" id="SSF103511">
    <property type="entry name" value="Chlorophyll a-b binding protein"/>
    <property type="match status" value="1"/>
</dbReference>
<dbReference type="PROSITE" id="PS00534">
    <property type="entry name" value="FERROCHELATASE"/>
    <property type="match status" value="1"/>
</dbReference>
<evidence type="ECO:0000255" key="1">
    <source>
        <dbReference type="HAMAP-Rule" id="MF_00323"/>
    </source>
</evidence>
<feature type="chain" id="PRO_0000175182" description="Ferrochelatase">
    <location>
        <begin position="1"/>
        <end position="391"/>
    </location>
</feature>
<feature type="binding site" evidence="1">
    <location>
        <position position="196"/>
    </location>
    <ligand>
        <name>Fe cation</name>
        <dbReference type="ChEBI" id="CHEBI:24875"/>
    </ligand>
</feature>
<feature type="binding site" evidence="1">
    <location>
        <position position="281"/>
    </location>
    <ligand>
        <name>Fe cation</name>
        <dbReference type="ChEBI" id="CHEBI:24875"/>
    </ligand>
</feature>
<organism>
    <name type="scientific">Prochlorococcus marinus subsp. pastoris (strain CCMP1986 / NIES-2087 / MED4)</name>
    <dbReference type="NCBI Taxonomy" id="59919"/>
    <lineage>
        <taxon>Bacteria</taxon>
        <taxon>Bacillati</taxon>
        <taxon>Cyanobacteriota</taxon>
        <taxon>Cyanophyceae</taxon>
        <taxon>Synechococcales</taxon>
        <taxon>Prochlorococcaceae</taxon>
        <taxon>Prochlorococcus</taxon>
    </lineage>
</organism>
<protein>
    <recommendedName>
        <fullName evidence="1">Ferrochelatase</fullName>
        <ecNumber evidence="1">4.98.1.1</ecNumber>
    </recommendedName>
    <alternativeName>
        <fullName evidence="1">Heme synthase</fullName>
    </alternativeName>
    <alternativeName>
        <fullName evidence="1">Protoheme ferro-lyase</fullName>
    </alternativeName>
</protein>